<sequence length="183" mass="21058">MDIDPYKEFGATVELLSFLPSDFFPSVRDLLDTAAALYRDALESPEHCSPHHTALRQAILCWGDLITLSTWVGTNLEDPASRDLVVSYVNSNMGLKFRQLLWFHISCLTFGRETVLEYLVSFGVWIRTPPAYRPPNAPILSTLPETTVVRRRGRSPRRRTPSPRRRRSQSPRRRRSQSRESQC</sequence>
<name>CAPSD_HBVD4</name>
<feature type="chain" id="PRO_0000324370" description="Capsid protein">
    <location>
        <begin position="1"/>
        <end position="183"/>
    </location>
</feature>
<feature type="repeat" description="1; half-length">
    <location>
        <begin position="155"/>
        <end position="161"/>
    </location>
</feature>
<feature type="repeat" description="2">
    <location>
        <begin position="162"/>
        <end position="169"/>
    </location>
</feature>
<feature type="repeat" description="3">
    <location>
        <begin position="170"/>
        <end position="177"/>
    </location>
</feature>
<feature type="region of interest" description="Disordered" evidence="2">
    <location>
        <begin position="136"/>
        <end position="183"/>
    </location>
</feature>
<feature type="region of interest" description="3 X 8 AA repeats of S-P-R-R-R-[PR]-S-Q">
    <location>
        <begin position="155"/>
        <end position="177"/>
    </location>
</feature>
<feature type="region of interest" description="RNA binding" evidence="1">
    <location>
        <begin position="177"/>
        <end position="183"/>
    </location>
</feature>
<feature type="short sequence motif" description="Bipartite nuclear localization signal" evidence="1">
    <location>
        <begin position="158"/>
        <end position="175"/>
    </location>
</feature>
<feature type="compositionally biased region" description="Basic residues" evidence="2">
    <location>
        <begin position="149"/>
        <end position="176"/>
    </location>
</feature>
<feature type="modified residue" description="Phosphoserine; by host" evidence="1">
    <location>
        <position position="155"/>
    </location>
</feature>
<feature type="modified residue" description="Phosphoserine; by host" evidence="1">
    <location>
        <position position="162"/>
    </location>
</feature>
<feature type="modified residue" description="Phosphoserine; by host" evidence="1">
    <location>
        <position position="170"/>
    </location>
</feature>
<evidence type="ECO:0000255" key="1">
    <source>
        <dbReference type="HAMAP-Rule" id="MF_04076"/>
    </source>
</evidence>
<evidence type="ECO:0000256" key="2">
    <source>
        <dbReference type="SAM" id="MobiDB-lite"/>
    </source>
</evidence>
<proteinExistence type="inferred from homology"/>
<protein>
    <recommendedName>
        <fullName evidence="1">Capsid protein</fullName>
    </recommendedName>
    <alternativeName>
        <fullName evidence="1">Core antigen</fullName>
    </alternativeName>
    <alternativeName>
        <fullName evidence="1">Core protein</fullName>
    </alternativeName>
    <alternativeName>
        <fullName evidence="1">HBcAg</fullName>
    </alternativeName>
    <alternativeName>
        <fullName evidence="1">p21.5</fullName>
    </alternativeName>
</protein>
<accession>Q9QMI2</accession>
<reference key="1">
    <citation type="journal article" date="1988" name="J. Gen. Virol.">
        <title>Typing hepatitis B virus by homology in nucleotide sequence: comparison of surface antigen subtypes.</title>
        <authorList>
            <person name="Okamoto H."/>
            <person name="Tsuda F."/>
            <person name="Sakugawa H."/>
            <person name="Sastrosoewignjo R.I."/>
            <person name="Imai M."/>
            <person name="Miyakawa Y."/>
            <person name="Mayumi M."/>
        </authorList>
    </citation>
    <scope>NUCLEOTIDE SEQUENCE [GENOMIC DNA]</scope>
</reference>
<gene>
    <name evidence="1" type="primary">C</name>
</gene>
<organismHost>
    <name type="scientific">Homo sapiens</name>
    <name type="common">Human</name>
    <dbReference type="NCBI Taxonomy" id="9606"/>
</organismHost>
<organismHost>
    <name type="scientific">Pan troglodytes</name>
    <name type="common">Chimpanzee</name>
    <dbReference type="NCBI Taxonomy" id="9598"/>
</organismHost>
<keyword id="KW-0024">Alternative initiation</keyword>
<keyword id="KW-0167">Capsid protein</keyword>
<keyword id="KW-1176">Cytoplasmic inwards viral transport</keyword>
<keyword id="KW-0238">DNA-binding</keyword>
<keyword id="KW-1035">Host cytoplasm</keyword>
<keyword id="KW-0945">Host-virus interaction</keyword>
<keyword id="KW-1177">Microtubular inwards viral transport</keyword>
<keyword id="KW-0597">Phosphoprotein</keyword>
<keyword id="KW-1185">Reference proteome</keyword>
<keyword id="KW-0677">Repeat</keyword>
<keyword id="KW-0694">RNA-binding</keyword>
<keyword id="KW-1144">T=4 icosahedral capsid protein</keyword>
<keyword id="KW-1163">Viral penetration into host nucleus</keyword>
<keyword id="KW-0946">Virion</keyword>
<keyword id="KW-1160">Virus entry into host cell</keyword>
<organism>
    <name type="scientific">Hepatitis B virus genotype D subtype ayw (isolate Japan/JYW796/1988)</name>
    <name type="common">HBV-D</name>
    <dbReference type="NCBI Taxonomy" id="489487"/>
    <lineage>
        <taxon>Viruses</taxon>
        <taxon>Riboviria</taxon>
        <taxon>Pararnavirae</taxon>
        <taxon>Artverviricota</taxon>
        <taxon>Revtraviricetes</taxon>
        <taxon>Blubervirales</taxon>
        <taxon>Hepadnaviridae</taxon>
        <taxon>Orthohepadnavirus</taxon>
        <taxon>Hepatitis B virus</taxon>
        <taxon>hepatitis B virus genotype D</taxon>
    </lineage>
</organism>
<dbReference type="EMBL" id="AB033558">
    <property type="protein sequence ID" value="BAA85372.1"/>
    <property type="molecule type" value="Genomic_DNA"/>
</dbReference>
<dbReference type="BMRB" id="Q9QMI2"/>
<dbReference type="SMR" id="Q9QMI2"/>
<dbReference type="Proteomes" id="UP000007931">
    <property type="component" value="Genome"/>
</dbReference>
<dbReference type="GO" id="GO:0043657">
    <property type="term" value="C:host cell"/>
    <property type="evidence" value="ECO:0007669"/>
    <property type="project" value="GOC"/>
</dbReference>
<dbReference type="GO" id="GO:0030430">
    <property type="term" value="C:host cell cytoplasm"/>
    <property type="evidence" value="ECO:0007669"/>
    <property type="project" value="UniProtKB-SubCell"/>
</dbReference>
<dbReference type="GO" id="GO:0039619">
    <property type="term" value="C:T=4 icosahedral viral capsid"/>
    <property type="evidence" value="ECO:0007669"/>
    <property type="project" value="UniProtKB-UniRule"/>
</dbReference>
<dbReference type="GO" id="GO:0003677">
    <property type="term" value="F:DNA binding"/>
    <property type="evidence" value="ECO:0007669"/>
    <property type="project" value="UniProtKB-UniRule"/>
</dbReference>
<dbReference type="GO" id="GO:0003723">
    <property type="term" value="F:RNA binding"/>
    <property type="evidence" value="ECO:0007669"/>
    <property type="project" value="UniProtKB-UniRule"/>
</dbReference>
<dbReference type="GO" id="GO:0005198">
    <property type="term" value="F:structural molecule activity"/>
    <property type="evidence" value="ECO:0007669"/>
    <property type="project" value="UniProtKB-UniRule"/>
</dbReference>
<dbReference type="GO" id="GO:0075521">
    <property type="term" value="P:microtubule-dependent intracellular transport of viral material towards nucleus"/>
    <property type="evidence" value="ECO:0007669"/>
    <property type="project" value="UniProtKB-UniRule"/>
</dbReference>
<dbReference type="GO" id="GO:0046718">
    <property type="term" value="P:symbiont entry into host cell"/>
    <property type="evidence" value="ECO:0007669"/>
    <property type="project" value="UniProtKB-UniRule"/>
</dbReference>
<dbReference type="GO" id="GO:0075732">
    <property type="term" value="P:viral penetration into host nucleus"/>
    <property type="evidence" value="ECO:0007669"/>
    <property type="project" value="UniProtKB-UniRule"/>
</dbReference>
<dbReference type="FunFam" id="1.10.4090.10:FF:000001">
    <property type="entry name" value="Capsid protein"/>
    <property type="match status" value="1"/>
</dbReference>
<dbReference type="Gene3D" id="1.10.4090.10">
    <property type="entry name" value="Viral capsid, core domain supefamily, Hepatitis B virus"/>
    <property type="match status" value="1"/>
</dbReference>
<dbReference type="HAMAP" id="MF_04076">
    <property type="entry name" value="HBV_HBEAG"/>
    <property type="match status" value="1"/>
</dbReference>
<dbReference type="InterPro" id="IPR002006">
    <property type="entry name" value="Hepatitis_core"/>
</dbReference>
<dbReference type="InterPro" id="IPR036459">
    <property type="entry name" value="Viral_capsid_core_dom_sf_HBV"/>
</dbReference>
<dbReference type="Pfam" id="PF00906">
    <property type="entry name" value="Hepatitis_core"/>
    <property type="match status" value="3"/>
</dbReference>
<dbReference type="SUPFAM" id="SSF47852">
    <property type="entry name" value="Hepatitis B viral capsid (hbcag)"/>
    <property type="match status" value="1"/>
</dbReference>
<comment type="function">
    <text evidence="1">Self assembles to form an icosahedral capsid. Most capsids appear to be large particles with an icosahedral symmetry of T=4 and consist of 240 copies of capsid protein, though a fraction forms smaller T=3 particles consisting of 180 capsid proteins. Entering capsids are transported along microtubules to the nucleus. Phosphorylation of the capsid is thought to induce exposure of nuclear localization signal in the C-terminal portion of the capsid protein that allows binding to the nuclear pore complex via the importin (karyopherin-) alpha and beta. Capsids are imported in intact form through the nuclear pore into the nuclear basket, where it probably binds NUP153. Only capsids that contain the mature viral genome can release the viral DNA and capsid protein into the nucleoplasm. Immature capsids get stuck in the basket. Capsids encapsulate the pre-genomic RNA and the P protein. Pre-genomic RNA is reverse-transcribed into DNA while the capsid is still in the cytoplasm. The capsid can then either be directed to the nucleus, providing more genomes for transcription, or bud through the endoplasmic reticulum to provide new virions.</text>
</comment>
<comment type="subunit">
    <text evidence="1">Homodimerizes, then multimerizes. Interacts with cytosol exposed regions of viral L glycoprotein present in the reticulum-to-Golgi compartment. Interacts with human FLNB. Phosphorylated form interacts with host importin alpha; this interaction depends on the exposure of the NLS, which itself depends upon genome maturation and/or phosphorylation of the capsid protein. Interacts with host NUP153.</text>
</comment>
<comment type="subcellular location">
    <subcellularLocation>
        <location evidence="1">Virion</location>
    </subcellularLocation>
    <subcellularLocation>
        <location evidence="1">Host cytoplasm</location>
    </subcellularLocation>
</comment>
<comment type="alternative products">
    <event type="alternative initiation"/>
    <isoform>
        <id>Q9QMI2-1</id>
        <name>Capsid protein</name>
        <sequence type="displayed"/>
    </isoform>
    <isoform>
        <id>P0C6I0-1</id>
        <name>External core antigen</name>
        <sequence type="external"/>
    </isoform>
</comment>
<comment type="PTM">
    <text evidence="1">Phosphorylated by host SRPK1, SRPK2, and maybe protein kinase C or GAPDH. Phosphorylation is critical for pregenomic RNA packaging. Protein kinase C phosphorylation is stimulated by HBx protein and may play a role in transport of the viral genome to the nucleus at the late step during the viral replication cycle.</text>
</comment>
<comment type="similarity">
    <text evidence="1">Belongs to the orthohepadnavirus core antigen family.</text>
</comment>